<evidence type="ECO:0000250" key="1">
    <source>
        <dbReference type="UniProtKB" id="P0AA37"/>
    </source>
</evidence>
<evidence type="ECO:0000305" key="2"/>
<comment type="function">
    <text evidence="1">Dual specificity enzyme that catalyzes the synthesis of pseudouridine from uracil-746 in 23S ribosomal RNA and from uracil-32 in the anticodon stem and loop of transfer RNAs.</text>
</comment>
<comment type="catalytic activity">
    <reaction evidence="1">
        <text>uridine(32) in tRNA = pseudouridine(32) in tRNA</text>
        <dbReference type="Rhea" id="RHEA:42544"/>
        <dbReference type="Rhea" id="RHEA-COMP:10107"/>
        <dbReference type="Rhea" id="RHEA-COMP:10108"/>
        <dbReference type="ChEBI" id="CHEBI:65314"/>
        <dbReference type="ChEBI" id="CHEBI:65315"/>
        <dbReference type="EC" id="5.4.99.28"/>
    </reaction>
</comment>
<comment type="catalytic activity">
    <reaction evidence="1">
        <text>uridine(746) in 23S rRNA = pseudouridine(746) in 23S rRNA</text>
        <dbReference type="Rhea" id="RHEA:42548"/>
        <dbReference type="Rhea" id="RHEA-COMP:10109"/>
        <dbReference type="Rhea" id="RHEA-COMP:10110"/>
        <dbReference type="ChEBI" id="CHEBI:65314"/>
        <dbReference type="ChEBI" id="CHEBI:65315"/>
        <dbReference type="EC" id="5.4.99.29"/>
    </reaction>
</comment>
<comment type="similarity">
    <text evidence="2">Belongs to the pseudouridine synthase RluA family.</text>
</comment>
<gene>
    <name type="primary">rluA</name>
    <name type="ordered locus">YPO0497</name>
    <name type="ordered locus">y3678</name>
    <name type="ordered locus">YP_3682</name>
</gene>
<organism>
    <name type="scientific">Yersinia pestis</name>
    <dbReference type="NCBI Taxonomy" id="632"/>
    <lineage>
        <taxon>Bacteria</taxon>
        <taxon>Pseudomonadati</taxon>
        <taxon>Pseudomonadota</taxon>
        <taxon>Gammaproteobacteria</taxon>
        <taxon>Enterobacterales</taxon>
        <taxon>Yersiniaceae</taxon>
        <taxon>Yersinia</taxon>
    </lineage>
</organism>
<feature type="chain" id="PRO_0000162663" description="Dual-specificity RNA pseudouridine synthase RluA">
    <location>
        <begin position="1"/>
        <end position="206"/>
    </location>
</feature>
<feature type="active site" evidence="1">
    <location>
        <position position="51"/>
    </location>
</feature>
<reference key="1">
    <citation type="journal article" date="2001" name="Nature">
        <title>Genome sequence of Yersinia pestis, the causative agent of plague.</title>
        <authorList>
            <person name="Parkhill J."/>
            <person name="Wren B.W."/>
            <person name="Thomson N.R."/>
            <person name="Titball R.W."/>
            <person name="Holden M.T.G."/>
            <person name="Prentice M.B."/>
            <person name="Sebaihia M."/>
            <person name="James K.D."/>
            <person name="Churcher C.M."/>
            <person name="Mungall K.L."/>
            <person name="Baker S."/>
            <person name="Basham D."/>
            <person name="Bentley S.D."/>
            <person name="Brooks K."/>
            <person name="Cerdeno-Tarraga A.-M."/>
            <person name="Chillingworth T."/>
            <person name="Cronin A."/>
            <person name="Davies R.M."/>
            <person name="Davis P."/>
            <person name="Dougan G."/>
            <person name="Feltwell T."/>
            <person name="Hamlin N."/>
            <person name="Holroyd S."/>
            <person name="Jagels K."/>
            <person name="Karlyshev A.V."/>
            <person name="Leather S."/>
            <person name="Moule S."/>
            <person name="Oyston P.C.F."/>
            <person name="Quail M.A."/>
            <person name="Rutherford K.M."/>
            <person name="Simmonds M."/>
            <person name="Skelton J."/>
            <person name="Stevens K."/>
            <person name="Whitehead S."/>
            <person name="Barrell B.G."/>
        </authorList>
    </citation>
    <scope>NUCLEOTIDE SEQUENCE [LARGE SCALE GENOMIC DNA]</scope>
    <source>
        <strain>CO-92 / Biovar Orientalis</strain>
    </source>
</reference>
<reference key="2">
    <citation type="journal article" date="2002" name="J. Bacteriol.">
        <title>Genome sequence of Yersinia pestis KIM.</title>
        <authorList>
            <person name="Deng W."/>
            <person name="Burland V."/>
            <person name="Plunkett G. III"/>
            <person name="Boutin A."/>
            <person name="Mayhew G.F."/>
            <person name="Liss P."/>
            <person name="Perna N.T."/>
            <person name="Rose D.J."/>
            <person name="Mau B."/>
            <person name="Zhou S."/>
            <person name="Schwartz D.C."/>
            <person name="Fetherston J.D."/>
            <person name="Lindler L.E."/>
            <person name="Brubaker R.R."/>
            <person name="Plano G.V."/>
            <person name="Straley S.C."/>
            <person name="McDonough K.A."/>
            <person name="Nilles M.L."/>
            <person name="Matson J.S."/>
            <person name="Blattner F.R."/>
            <person name="Perry R.D."/>
        </authorList>
    </citation>
    <scope>NUCLEOTIDE SEQUENCE [LARGE SCALE GENOMIC DNA]</scope>
    <source>
        <strain>KIM10+ / Biovar Mediaevalis</strain>
    </source>
</reference>
<reference key="3">
    <citation type="journal article" date="2004" name="DNA Res.">
        <title>Complete genome sequence of Yersinia pestis strain 91001, an isolate avirulent to humans.</title>
        <authorList>
            <person name="Song Y."/>
            <person name="Tong Z."/>
            <person name="Wang J."/>
            <person name="Wang L."/>
            <person name="Guo Z."/>
            <person name="Han Y."/>
            <person name="Zhang J."/>
            <person name="Pei D."/>
            <person name="Zhou D."/>
            <person name="Qin H."/>
            <person name="Pang X."/>
            <person name="Han Y."/>
            <person name="Zhai J."/>
            <person name="Li M."/>
            <person name="Cui B."/>
            <person name="Qi Z."/>
            <person name="Jin L."/>
            <person name="Dai R."/>
            <person name="Chen F."/>
            <person name="Li S."/>
            <person name="Ye C."/>
            <person name="Du Z."/>
            <person name="Lin W."/>
            <person name="Wang J."/>
            <person name="Yu J."/>
            <person name="Yang H."/>
            <person name="Wang J."/>
            <person name="Huang P."/>
            <person name="Yang R."/>
        </authorList>
    </citation>
    <scope>NUCLEOTIDE SEQUENCE [LARGE SCALE GENOMIC DNA]</scope>
    <source>
        <strain>91001 / Biovar Mediaevalis</strain>
    </source>
</reference>
<accession>Q8ZIK1</accession>
<accession>Q0WJG8</accession>
<keyword id="KW-0413">Isomerase</keyword>
<keyword id="KW-1185">Reference proteome</keyword>
<keyword id="KW-0698">rRNA processing</keyword>
<keyword id="KW-0819">tRNA processing</keyword>
<protein>
    <recommendedName>
        <fullName evidence="1">Dual-specificity RNA pseudouridine synthase RluA</fullName>
        <ecNumber evidence="1">5.4.99.28</ecNumber>
        <ecNumber evidence="1">5.4.99.29</ecNumber>
    </recommendedName>
    <alternativeName>
        <fullName evidence="1">23S rRNA pseudouridine(746) synthase</fullName>
    </alternativeName>
    <alternativeName>
        <fullName evidence="1">Ribosomal large subunit pseudouridine synthase A</fullName>
    </alternativeName>
    <alternativeName>
        <fullName evidence="1">rRNA pseudouridylate synthase A</fullName>
    </alternativeName>
    <alternativeName>
        <fullName evidence="1">rRNA-uridine isomerase A</fullName>
    </alternativeName>
    <alternativeName>
        <fullName evidence="1">tRNA pseudouridine(32) synthase</fullName>
    </alternativeName>
</protein>
<proteinExistence type="inferred from homology"/>
<sequence>MIVLYQDKHIMVVNKPSGLLSVPGRAPENKDSVMTRVQNDFPTAESVHRLDMATSGVIVVALTKAAERELKRQFREREPKKTYIARVWGHLAQDEGLIDLPLICDWPNRPKQKVCYETGKSAQTEYQVISRDDDGSTRVKLSPITGRSHQLRVHMLAMGHPILGDGFYAHPEAKAMASRLQLHAQQLCITHPEFGTPMHFKCEAEF</sequence>
<name>RLUA_YERPE</name>
<dbReference type="EC" id="5.4.99.28" evidence="1"/>
<dbReference type="EC" id="5.4.99.29" evidence="1"/>
<dbReference type="EMBL" id="AL590842">
    <property type="protein sequence ID" value="CAL19177.1"/>
    <property type="molecule type" value="Genomic_DNA"/>
</dbReference>
<dbReference type="EMBL" id="AE009952">
    <property type="protein sequence ID" value="AAM87226.1"/>
    <property type="molecule type" value="Genomic_DNA"/>
</dbReference>
<dbReference type="EMBL" id="AE017042">
    <property type="protein sequence ID" value="AAS63830.1"/>
    <property type="molecule type" value="Genomic_DNA"/>
</dbReference>
<dbReference type="PIR" id="AG0061">
    <property type="entry name" value="AG0061"/>
</dbReference>
<dbReference type="RefSeq" id="WP_002210485.1">
    <property type="nucleotide sequence ID" value="NZ_WUCM01000024.1"/>
</dbReference>
<dbReference type="RefSeq" id="YP_002345570.1">
    <property type="nucleotide sequence ID" value="NC_003143.1"/>
</dbReference>
<dbReference type="SMR" id="Q8ZIK1"/>
<dbReference type="STRING" id="214092.YPO0497"/>
<dbReference type="PaxDb" id="214092-YPO0497"/>
<dbReference type="DNASU" id="1148625"/>
<dbReference type="EnsemblBacteria" id="AAS63830">
    <property type="protein sequence ID" value="AAS63830"/>
    <property type="gene ID" value="YP_3682"/>
</dbReference>
<dbReference type="GeneID" id="57974113"/>
<dbReference type="KEGG" id="ype:YPO0497"/>
<dbReference type="KEGG" id="ypk:y3678"/>
<dbReference type="KEGG" id="ypm:YP_3682"/>
<dbReference type="PATRIC" id="fig|214092.21.peg.747"/>
<dbReference type="eggNOG" id="COG0564">
    <property type="taxonomic scope" value="Bacteria"/>
</dbReference>
<dbReference type="HOGENOM" id="CLU_016902_11_1_6"/>
<dbReference type="OMA" id="YGFCEPA"/>
<dbReference type="OrthoDB" id="9807829at2"/>
<dbReference type="Proteomes" id="UP000000815">
    <property type="component" value="Chromosome"/>
</dbReference>
<dbReference type="Proteomes" id="UP000001019">
    <property type="component" value="Chromosome"/>
</dbReference>
<dbReference type="Proteomes" id="UP000002490">
    <property type="component" value="Chromosome"/>
</dbReference>
<dbReference type="GO" id="GO:0160142">
    <property type="term" value="F:23S rRNA pseudouridine(746) synthase activity"/>
    <property type="evidence" value="ECO:0007669"/>
    <property type="project" value="UniProtKB-EC"/>
</dbReference>
<dbReference type="GO" id="GO:0009982">
    <property type="term" value="F:pseudouridine synthase activity"/>
    <property type="evidence" value="ECO:0000318"/>
    <property type="project" value="GO_Central"/>
</dbReference>
<dbReference type="GO" id="GO:0003723">
    <property type="term" value="F:RNA binding"/>
    <property type="evidence" value="ECO:0007669"/>
    <property type="project" value="InterPro"/>
</dbReference>
<dbReference type="GO" id="GO:0160151">
    <property type="term" value="F:tRNA pseudouridine(32) synthase activity"/>
    <property type="evidence" value="ECO:0007669"/>
    <property type="project" value="UniProtKB-EC"/>
</dbReference>
<dbReference type="GO" id="GO:0000455">
    <property type="term" value="P:enzyme-directed rRNA pseudouridine synthesis"/>
    <property type="evidence" value="ECO:0000318"/>
    <property type="project" value="GO_Central"/>
</dbReference>
<dbReference type="GO" id="GO:0008033">
    <property type="term" value="P:tRNA processing"/>
    <property type="evidence" value="ECO:0007669"/>
    <property type="project" value="UniProtKB-KW"/>
</dbReference>
<dbReference type="CDD" id="cd02869">
    <property type="entry name" value="PseudoU_synth_RluA_like"/>
    <property type="match status" value="1"/>
</dbReference>
<dbReference type="FunFam" id="3.30.2350.10:FF:000005">
    <property type="entry name" value="Pseudouridine synthase"/>
    <property type="match status" value="1"/>
</dbReference>
<dbReference type="Gene3D" id="3.30.2350.10">
    <property type="entry name" value="Pseudouridine synthase"/>
    <property type="match status" value="1"/>
</dbReference>
<dbReference type="InterPro" id="IPR020103">
    <property type="entry name" value="PsdUridine_synth_cat_dom_sf"/>
</dbReference>
<dbReference type="InterPro" id="IPR006224">
    <property type="entry name" value="PsdUridine_synth_RluA-like_CS"/>
</dbReference>
<dbReference type="InterPro" id="IPR006145">
    <property type="entry name" value="PsdUridine_synth_RsuA/RluA"/>
</dbReference>
<dbReference type="InterPro" id="IPR050188">
    <property type="entry name" value="RluA_PseudoU_synthase"/>
</dbReference>
<dbReference type="NCBIfam" id="NF007543">
    <property type="entry name" value="PRK10158.1"/>
    <property type="match status" value="1"/>
</dbReference>
<dbReference type="PANTHER" id="PTHR21600:SF91">
    <property type="entry name" value="DUAL-SPECIFICITY RNA PSEUDOURIDINE SYNTHASE RLUA"/>
    <property type="match status" value="1"/>
</dbReference>
<dbReference type="PANTHER" id="PTHR21600">
    <property type="entry name" value="MITOCHONDRIAL RNA PSEUDOURIDINE SYNTHASE"/>
    <property type="match status" value="1"/>
</dbReference>
<dbReference type="Pfam" id="PF00849">
    <property type="entry name" value="PseudoU_synth_2"/>
    <property type="match status" value="1"/>
</dbReference>
<dbReference type="SUPFAM" id="SSF55120">
    <property type="entry name" value="Pseudouridine synthase"/>
    <property type="match status" value="1"/>
</dbReference>
<dbReference type="PROSITE" id="PS01129">
    <property type="entry name" value="PSI_RLU"/>
    <property type="match status" value="1"/>
</dbReference>